<protein>
    <recommendedName>
        <fullName>Claudin-15</fullName>
    </recommendedName>
</protein>
<comment type="function">
    <text evidence="3 4">Forms paracellular channels: polymerizes in tight junction strands with cation- and water-selective channels through the strands, conveying epithelial permeability in a process known as paracellular tight junction permeability (By similarity). In intestinal epithelium, allows for sodium and water fluxes from the peritoneal side to the lumen of the intestine to regulate nutrient absorption and intestinal morphogenesis (By similarity).</text>
</comment>
<comment type="catalytic activity">
    <reaction evidence="3">
        <text>Na(+)(in) = Na(+)(out)</text>
        <dbReference type="Rhea" id="RHEA:34963"/>
        <dbReference type="ChEBI" id="CHEBI:29101"/>
    </reaction>
</comment>
<comment type="catalytic activity">
    <reaction evidence="3">
        <text>K(+)(in) = K(+)(out)</text>
        <dbReference type="Rhea" id="RHEA:29463"/>
        <dbReference type="ChEBI" id="CHEBI:29103"/>
    </reaction>
</comment>
<comment type="catalytic activity">
    <reaction evidence="3">
        <text>Cs(+)(in) = Cs(+)(out)</text>
        <dbReference type="Rhea" id="RHEA:78555"/>
        <dbReference type="ChEBI" id="CHEBI:49547"/>
    </reaction>
</comment>
<comment type="catalytic activity">
    <reaction evidence="3">
        <text>Rb(+)(in) = Rb(+)(out)</text>
        <dbReference type="Rhea" id="RHEA:78547"/>
        <dbReference type="ChEBI" id="CHEBI:49847"/>
    </reaction>
</comment>
<comment type="catalytic activity">
    <reaction evidence="3">
        <text>Li(+)(in) = Li(+)(out)</text>
        <dbReference type="Rhea" id="RHEA:78551"/>
        <dbReference type="ChEBI" id="CHEBI:49713"/>
    </reaction>
</comment>
<comment type="catalytic activity">
    <reaction evidence="3">
        <text>NH4(+)(in) = NH4(+)(out)</text>
        <dbReference type="Rhea" id="RHEA:28747"/>
        <dbReference type="ChEBI" id="CHEBI:28938"/>
    </reaction>
</comment>
<comment type="catalytic activity">
    <reaction evidence="3">
        <text>methylamine(out) = methylamine(in)</text>
        <dbReference type="Rhea" id="RHEA:74391"/>
        <dbReference type="ChEBI" id="CHEBI:59338"/>
    </reaction>
</comment>
<comment type="catalytic activity">
    <reaction evidence="3">
        <text>H2O(in) = H2O(out)</text>
        <dbReference type="Rhea" id="RHEA:29667"/>
        <dbReference type="ChEBI" id="CHEBI:15377"/>
    </reaction>
</comment>
<comment type="subunit">
    <text evidence="3">Can form homo- and heteropolymeric tight junction strands.</text>
</comment>
<comment type="subcellular location">
    <subcellularLocation>
        <location evidence="3">Cell junction</location>
        <location evidence="3">Tight junction</location>
    </subcellularLocation>
    <subcellularLocation>
        <location evidence="3">Cell membrane</location>
        <topology evidence="5">Multi-pass membrane protein</topology>
    </subcellularLocation>
</comment>
<comment type="PTM">
    <text evidence="4">Palmitoylated.</text>
</comment>
<comment type="similarity">
    <text evidence="6">Belongs to the claudin family.</text>
</comment>
<dbReference type="EMBL" id="BC112464">
    <property type="protein sequence ID" value="AAI12465.1"/>
    <property type="molecule type" value="mRNA"/>
</dbReference>
<dbReference type="RefSeq" id="NP_001039651.1">
    <property type="nucleotide sequence ID" value="NM_001046186.2"/>
</dbReference>
<dbReference type="SMR" id="Q2KIY2"/>
<dbReference type="FunCoup" id="Q2KIY2">
    <property type="interactions" value="222"/>
</dbReference>
<dbReference type="STRING" id="9913.ENSBTAP00000000450"/>
<dbReference type="PaxDb" id="9913-ENSBTAP00000000450"/>
<dbReference type="GeneID" id="514998"/>
<dbReference type="KEGG" id="bta:514998"/>
<dbReference type="CTD" id="24146"/>
<dbReference type="eggNOG" id="ENOG502RYAR">
    <property type="taxonomic scope" value="Eukaryota"/>
</dbReference>
<dbReference type="InParanoid" id="Q2KIY2"/>
<dbReference type="OrthoDB" id="9933182at2759"/>
<dbReference type="Proteomes" id="UP000009136">
    <property type="component" value="Unplaced"/>
</dbReference>
<dbReference type="GO" id="GO:0005923">
    <property type="term" value="C:bicellular tight junction"/>
    <property type="evidence" value="ECO:0000318"/>
    <property type="project" value="GO_Central"/>
</dbReference>
<dbReference type="GO" id="GO:0005886">
    <property type="term" value="C:plasma membrane"/>
    <property type="evidence" value="ECO:0000318"/>
    <property type="project" value="GO_Central"/>
</dbReference>
<dbReference type="GO" id="GO:0070160">
    <property type="term" value="C:tight junction"/>
    <property type="evidence" value="ECO:0000250"/>
    <property type="project" value="UniProtKB"/>
</dbReference>
<dbReference type="GO" id="GO:0160187">
    <property type="term" value="F:paracellular tight junction channel activity"/>
    <property type="evidence" value="ECO:0000250"/>
    <property type="project" value="UniProtKB"/>
</dbReference>
<dbReference type="GO" id="GO:0005198">
    <property type="term" value="F:structural molecule activity"/>
    <property type="evidence" value="ECO:0007669"/>
    <property type="project" value="InterPro"/>
</dbReference>
<dbReference type="GO" id="GO:0070830">
    <property type="term" value="P:bicellular tight junction assembly"/>
    <property type="evidence" value="ECO:0000318"/>
    <property type="project" value="GO_Central"/>
</dbReference>
<dbReference type="GO" id="GO:0007155">
    <property type="term" value="P:cell adhesion"/>
    <property type="evidence" value="ECO:0000318"/>
    <property type="project" value="GO_Central"/>
</dbReference>
<dbReference type="GO" id="GO:0006811">
    <property type="term" value="P:monoatomic ion transport"/>
    <property type="evidence" value="ECO:0007669"/>
    <property type="project" value="UniProtKB-KW"/>
</dbReference>
<dbReference type="GO" id="GO:0160184">
    <property type="term" value="P:paracellular transport"/>
    <property type="evidence" value="ECO:0000250"/>
    <property type="project" value="UniProtKB"/>
</dbReference>
<dbReference type="GO" id="GO:1903985">
    <property type="term" value="P:regulation of intestinal D-glucose absorption"/>
    <property type="evidence" value="ECO:0000250"/>
    <property type="project" value="UniProtKB"/>
</dbReference>
<dbReference type="GO" id="GO:1904729">
    <property type="term" value="P:regulation of intestinal lipid absorption"/>
    <property type="evidence" value="ECO:0000250"/>
    <property type="project" value="UniProtKB"/>
</dbReference>
<dbReference type="FunFam" id="1.20.140.150:FF:000001">
    <property type="entry name" value="Claudin"/>
    <property type="match status" value="1"/>
</dbReference>
<dbReference type="Gene3D" id="1.20.140.150">
    <property type="match status" value="1"/>
</dbReference>
<dbReference type="InterPro" id="IPR006187">
    <property type="entry name" value="Claudin"/>
</dbReference>
<dbReference type="InterPro" id="IPR008094">
    <property type="entry name" value="Claudin15"/>
</dbReference>
<dbReference type="InterPro" id="IPR017974">
    <property type="entry name" value="Claudin_CS"/>
</dbReference>
<dbReference type="InterPro" id="IPR004031">
    <property type="entry name" value="PMP22/EMP/MP20/Claudin"/>
</dbReference>
<dbReference type="PANTHER" id="PTHR12002">
    <property type="entry name" value="CLAUDIN"/>
    <property type="match status" value="1"/>
</dbReference>
<dbReference type="Pfam" id="PF00822">
    <property type="entry name" value="PMP22_Claudin"/>
    <property type="match status" value="1"/>
</dbReference>
<dbReference type="PRINTS" id="PR01077">
    <property type="entry name" value="CLAUDIN"/>
</dbReference>
<dbReference type="PRINTS" id="PR01718">
    <property type="entry name" value="CLAUDIN15"/>
</dbReference>
<dbReference type="PROSITE" id="PS01346">
    <property type="entry name" value="CLAUDIN"/>
    <property type="match status" value="1"/>
</dbReference>
<gene>
    <name type="primary">CLDN15</name>
</gene>
<sequence length="235" mass="25074">MLVAVEIFGFFLTAVGLLMLGVTLAHSSWRVSTVHGNVITTNTIFENLWYSCATDSMGVHNCWEFPSMLALSGYIQACRALMITAILLGFLGLFLGMVGLRCTNIGGLELSRKTKLAATAGALHILAGICGMVAVSWYAFNITRDFFNPLYAGTKYELGPALYLGWSACLLAILGGICLFSNCCCSRDRDPATGVQLPYKAPVIPAASLAARLPAAASDEEGDSSFGKYGKNAYV</sequence>
<accession>Q2KIY2</accession>
<keyword id="KW-0965">Cell junction</keyword>
<keyword id="KW-1003">Cell membrane</keyword>
<keyword id="KW-1015">Disulfide bond</keyword>
<keyword id="KW-0406">Ion transport</keyword>
<keyword id="KW-0449">Lipoprotein</keyword>
<keyword id="KW-0472">Membrane</keyword>
<keyword id="KW-0564">Palmitate</keyword>
<keyword id="KW-0597">Phosphoprotein</keyword>
<keyword id="KW-1185">Reference proteome</keyword>
<keyword id="KW-0796">Tight junction</keyword>
<keyword id="KW-0812">Transmembrane</keyword>
<keyword id="KW-1133">Transmembrane helix</keyword>
<keyword id="KW-0813">Transport</keyword>
<feature type="chain" id="PRO_0000244419" description="Claudin-15">
    <location>
        <begin position="1"/>
        <end position="235"/>
    </location>
</feature>
<feature type="topological domain" description="Cytoplasmic" evidence="1">
    <location>
        <position position="1"/>
    </location>
</feature>
<feature type="transmembrane region" description="Helical" evidence="1">
    <location>
        <begin position="2"/>
        <end position="24"/>
    </location>
</feature>
<feature type="topological domain" description="Extracellular" evidence="1">
    <location>
        <begin position="25"/>
        <end position="74"/>
    </location>
</feature>
<feature type="transmembrane region" description="Helical" evidence="1">
    <location>
        <begin position="75"/>
        <end position="99"/>
    </location>
</feature>
<feature type="topological domain" description="Cytoplasmic" evidence="1">
    <location>
        <begin position="100"/>
        <end position="115"/>
    </location>
</feature>
<feature type="transmembrane region" description="Helical" evidence="1">
    <location>
        <begin position="116"/>
        <end position="140"/>
    </location>
</feature>
<feature type="topological domain" description="Extracellular" evidence="1">
    <location>
        <begin position="141"/>
        <end position="159"/>
    </location>
</feature>
<feature type="transmembrane region" description="Helical" evidence="1">
    <location>
        <begin position="160"/>
        <end position="182"/>
    </location>
</feature>
<feature type="topological domain" description="Cytoplasmic" evidence="1">
    <location>
        <begin position="183"/>
        <end position="235"/>
    </location>
</feature>
<feature type="region of interest" description="Important for the formation of tight-junction strand-like structures" evidence="1">
    <location>
        <begin position="146"/>
        <end position="147"/>
    </location>
</feature>
<feature type="site" description="Important for Na(+)-selective paracellular ion transport" evidence="1">
    <location>
        <position position="55"/>
    </location>
</feature>
<feature type="site" description="Important for Na(+)-selective paracellular ion transport" evidence="1">
    <location>
        <position position="64"/>
    </location>
</feature>
<feature type="site" description="Important for the formation of tight-junction strand-like structures" evidence="1">
    <location>
        <position position="68"/>
    </location>
</feature>
<feature type="modified residue" description="Phosphoserine" evidence="3">
    <location>
        <position position="111"/>
    </location>
</feature>
<feature type="modified residue" description="Phosphoserine" evidence="2">
    <location>
        <position position="218"/>
    </location>
</feature>
<feature type="modified residue" description="Phosphoserine" evidence="4">
    <location>
        <position position="225"/>
    </location>
</feature>
<feature type="disulfide bond" evidence="1">
    <location>
        <begin position="52"/>
        <end position="62"/>
    </location>
</feature>
<proteinExistence type="evidence at transcript level"/>
<name>CLD15_BOVIN</name>
<evidence type="ECO:0000250" key="1"/>
<evidence type="ECO:0000250" key="2">
    <source>
        <dbReference type="UniProtKB" id="D3ZQJ0"/>
    </source>
</evidence>
<evidence type="ECO:0000250" key="3">
    <source>
        <dbReference type="UniProtKB" id="P56746"/>
    </source>
</evidence>
<evidence type="ECO:0000250" key="4">
    <source>
        <dbReference type="UniProtKB" id="Q9Z0S5"/>
    </source>
</evidence>
<evidence type="ECO:0000255" key="5"/>
<evidence type="ECO:0000305" key="6"/>
<organism>
    <name type="scientific">Bos taurus</name>
    <name type="common">Bovine</name>
    <dbReference type="NCBI Taxonomy" id="9913"/>
    <lineage>
        <taxon>Eukaryota</taxon>
        <taxon>Metazoa</taxon>
        <taxon>Chordata</taxon>
        <taxon>Craniata</taxon>
        <taxon>Vertebrata</taxon>
        <taxon>Euteleostomi</taxon>
        <taxon>Mammalia</taxon>
        <taxon>Eutheria</taxon>
        <taxon>Laurasiatheria</taxon>
        <taxon>Artiodactyla</taxon>
        <taxon>Ruminantia</taxon>
        <taxon>Pecora</taxon>
        <taxon>Bovidae</taxon>
        <taxon>Bovinae</taxon>
        <taxon>Bos</taxon>
    </lineage>
</organism>
<reference key="1">
    <citation type="submission" date="2006-01" db="EMBL/GenBank/DDBJ databases">
        <authorList>
            <consortium name="NIH - Mammalian Gene Collection (MGC) project"/>
        </authorList>
    </citation>
    <scope>NUCLEOTIDE SEQUENCE [LARGE SCALE MRNA]</scope>
    <source>
        <strain>Hereford</strain>
        <tissue>Testis</tissue>
    </source>
</reference>